<sequence length="479" mass="55351">MTFKRIASSIQQDRLSNLPDVLLIMIISCLSFKECIRTSVLAKRWRYLCRETRNISFKETEYVDHFVSDKRSKRVSFAAYMCQWVSRYHGRYIETLEIYFSIPSDFLAAVESLIEFAVSRQVKNLVLDFSDPSWISTSCASRYDYVCVQLPVCVYSLTTLESLKIYSCGFDPSKFSNSRLPRKLSIGWIKLTDVESLLLNSPTLKSLSINYCWGIEIRNIAGDMKEFVFESCDFSSFMVCCFDLPNVEIFKYSGQILSFDVKRMNMSIKDVILDFTAEGLYEDRNQRTKLEGSVLSAFLNNLRGARTLSVCPYLLQTIQECEDPFDLLRPMETQHLVLRTRLHVMEFKGIKLLLDNCPNLETLTFDIFSRSLFSYNKSYYGVGPRSYWKKNLTYKSLPKTLKVVVVRNFTGRFGELNVLKFLIQSGRGRWPGREHGPMLERVELYMDSSMAESQKELADDGAMMLQSISGDVQVLVYDP</sequence>
<dbReference type="EMBL" id="AC058785">
    <property type="protein sequence ID" value="AAG51499.1"/>
    <property type="molecule type" value="Genomic_DNA"/>
</dbReference>
<dbReference type="EMBL" id="CP002684">
    <property type="protein sequence ID" value="AEE33387.1"/>
    <property type="molecule type" value="Genomic_DNA"/>
</dbReference>
<dbReference type="PIR" id="G96605">
    <property type="entry name" value="G96605"/>
</dbReference>
<dbReference type="RefSeq" id="NP_176035.1">
    <molecule id="Q9C7X8-1"/>
    <property type="nucleotide sequence ID" value="NM_104518.1"/>
</dbReference>
<dbReference type="FunCoup" id="Q9C7X8">
    <property type="interactions" value="139"/>
</dbReference>
<dbReference type="STRING" id="3702.Q9C7X8"/>
<dbReference type="PaxDb" id="3702-AT1G56400.1"/>
<dbReference type="EnsemblPlants" id="AT1G56400.1">
    <molecule id="Q9C7X8-1"/>
    <property type="protein sequence ID" value="AT1G56400.1"/>
    <property type="gene ID" value="AT1G56400"/>
</dbReference>
<dbReference type="GeneID" id="842093"/>
<dbReference type="Gramene" id="AT1G56400.1">
    <molecule id="Q9C7X8-1"/>
    <property type="protein sequence ID" value="AT1G56400.1"/>
    <property type="gene ID" value="AT1G56400"/>
</dbReference>
<dbReference type="KEGG" id="ath:AT1G56400"/>
<dbReference type="Araport" id="AT1G56400"/>
<dbReference type="TAIR" id="AT1G56400"/>
<dbReference type="eggNOG" id="ENOG502QVFC">
    <property type="taxonomic scope" value="Eukaryota"/>
</dbReference>
<dbReference type="InParanoid" id="Q9C7X8"/>
<dbReference type="OMA" id="FNENFFV"/>
<dbReference type="OrthoDB" id="1027103at2759"/>
<dbReference type="PhylomeDB" id="Q9C7X8"/>
<dbReference type="PRO" id="PR:Q9C7X8"/>
<dbReference type="Proteomes" id="UP000006548">
    <property type="component" value="Chromosome 1"/>
</dbReference>
<dbReference type="ExpressionAtlas" id="Q9C7X8">
    <property type="expression patterns" value="baseline and differential"/>
</dbReference>
<dbReference type="Gene3D" id="1.20.1280.50">
    <property type="match status" value="1"/>
</dbReference>
<dbReference type="Gene3D" id="3.80.10.10">
    <property type="entry name" value="Ribonuclease Inhibitor"/>
    <property type="match status" value="1"/>
</dbReference>
<dbReference type="InterPro" id="IPR036047">
    <property type="entry name" value="F-box-like_dom_sf"/>
</dbReference>
<dbReference type="InterPro" id="IPR001810">
    <property type="entry name" value="F-box_dom"/>
</dbReference>
<dbReference type="InterPro" id="IPR050232">
    <property type="entry name" value="FBL13/AtMIF1-like"/>
</dbReference>
<dbReference type="InterPro" id="IPR055357">
    <property type="entry name" value="LRR_At1g61320_AtMIF1"/>
</dbReference>
<dbReference type="InterPro" id="IPR032675">
    <property type="entry name" value="LRR_dom_sf"/>
</dbReference>
<dbReference type="PANTHER" id="PTHR31900:SF34">
    <property type="entry name" value="EMB|CAB62440.1-RELATED"/>
    <property type="match status" value="1"/>
</dbReference>
<dbReference type="PANTHER" id="PTHR31900">
    <property type="entry name" value="F-BOX/RNI SUPERFAMILY PROTEIN-RELATED"/>
    <property type="match status" value="1"/>
</dbReference>
<dbReference type="Pfam" id="PF00646">
    <property type="entry name" value="F-box"/>
    <property type="match status" value="1"/>
</dbReference>
<dbReference type="Pfam" id="PF23622">
    <property type="entry name" value="LRR_At1g61320_AtMIF1"/>
    <property type="match status" value="1"/>
</dbReference>
<dbReference type="SUPFAM" id="SSF81383">
    <property type="entry name" value="F-box domain"/>
    <property type="match status" value="1"/>
</dbReference>
<dbReference type="SUPFAM" id="SSF52047">
    <property type="entry name" value="RNI-like"/>
    <property type="match status" value="1"/>
</dbReference>
<dbReference type="PROSITE" id="PS50181">
    <property type="entry name" value="FBOX"/>
    <property type="match status" value="1"/>
</dbReference>
<gene>
    <name type="ordered locus">At1g56400</name>
    <name type="ORF">F13N6.18</name>
</gene>
<feature type="chain" id="PRO_0000281934" description="Putative F-box/LRR-repeat protein At1g56400">
    <location>
        <begin position="1"/>
        <end position="479"/>
    </location>
</feature>
<feature type="domain" description="F-box" evidence="1">
    <location>
        <begin position="12"/>
        <end position="60"/>
    </location>
</feature>
<feature type="repeat" description="LRR 1">
    <location>
        <begin position="99"/>
        <end position="129"/>
    </location>
</feature>
<feature type="repeat" description="LRR 2">
    <location>
        <begin position="139"/>
        <end position="167"/>
    </location>
</feature>
<feature type="repeat" description="LRR 3">
    <location>
        <begin position="186"/>
        <end position="211"/>
    </location>
</feature>
<feature type="repeat" description="LRR 4">
    <location>
        <begin position="228"/>
        <end position="254"/>
    </location>
</feature>
<feature type="repeat" description="LRR 5">
    <location>
        <begin position="287"/>
        <end position="312"/>
    </location>
</feature>
<feature type="repeat" description="LRR 6">
    <location>
        <begin position="342"/>
        <end position="367"/>
    </location>
</feature>
<feature type="repeat" description="LRR 7">
    <location>
        <begin position="419"/>
        <end position="446"/>
    </location>
</feature>
<evidence type="ECO:0000255" key="1">
    <source>
        <dbReference type="PROSITE-ProRule" id="PRU00080"/>
    </source>
</evidence>
<reference key="1">
    <citation type="journal article" date="2000" name="Nature">
        <title>Sequence and analysis of chromosome 1 of the plant Arabidopsis thaliana.</title>
        <authorList>
            <person name="Theologis A."/>
            <person name="Ecker J.R."/>
            <person name="Palm C.J."/>
            <person name="Federspiel N.A."/>
            <person name="Kaul S."/>
            <person name="White O."/>
            <person name="Alonso J."/>
            <person name="Altafi H."/>
            <person name="Araujo R."/>
            <person name="Bowman C.L."/>
            <person name="Brooks S.Y."/>
            <person name="Buehler E."/>
            <person name="Chan A."/>
            <person name="Chao Q."/>
            <person name="Chen H."/>
            <person name="Cheuk R.F."/>
            <person name="Chin C.W."/>
            <person name="Chung M.K."/>
            <person name="Conn L."/>
            <person name="Conway A.B."/>
            <person name="Conway A.R."/>
            <person name="Creasy T.H."/>
            <person name="Dewar K."/>
            <person name="Dunn P."/>
            <person name="Etgu P."/>
            <person name="Feldblyum T.V."/>
            <person name="Feng J.-D."/>
            <person name="Fong B."/>
            <person name="Fujii C.Y."/>
            <person name="Gill J.E."/>
            <person name="Goldsmith A.D."/>
            <person name="Haas B."/>
            <person name="Hansen N.F."/>
            <person name="Hughes B."/>
            <person name="Huizar L."/>
            <person name="Hunter J.L."/>
            <person name="Jenkins J."/>
            <person name="Johnson-Hopson C."/>
            <person name="Khan S."/>
            <person name="Khaykin E."/>
            <person name="Kim C.J."/>
            <person name="Koo H.L."/>
            <person name="Kremenetskaia I."/>
            <person name="Kurtz D.B."/>
            <person name="Kwan A."/>
            <person name="Lam B."/>
            <person name="Langin-Hooper S."/>
            <person name="Lee A."/>
            <person name="Lee J.M."/>
            <person name="Lenz C.A."/>
            <person name="Li J.H."/>
            <person name="Li Y.-P."/>
            <person name="Lin X."/>
            <person name="Liu S.X."/>
            <person name="Liu Z.A."/>
            <person name="Luros J.S."/>
            <person name="Maiti R."/>
            <person name="Marziali A."/>
            <person name="Militscher J."/>
            <person name="Miranda M."/>
            <person name="Nguyen M."/>
            <person name="Nierman W.C."/>
            <person name="Osborne B.I."/>
            <person name="Pai G."/>
            <person name="Peterson J."/>
            <person name="Pham P.K."/>
            <person name="Rizzo M."/>
            <person name="Rooney T."/>
            <person name="Rowley D."/>
            <person name="Sakano H."/>
            <person name="Salzberg S.L."/>
            <person name="Schwartz J.R."/>
            <person name="Shinn P."/>
            <person name="Southwick A.M."/>
            <person name="Sun H."/>
            <person name="Tallon L.J."/>
            <person name="Tambunga G."/>
            <person name="Toriumi M.J."/>
            <person name="Town C.D."/>
            <person name="Utterback T."/>
            <person name="Van Aken S."/>
            <person name="Vaysberg M."/>
            <person name="Vysotskaia V.S."/>
            <person name="Walker M."/>
            <person name="Wu D."/>
            <person name="Yu G."/>
            <person name="Fraser C.M."/>
            <person name="Venter J.C."/>
            <person name="Davis R.W."/>
        </authorList>
    </citation>
    <scope>NUCLEOTIDE SEQUENCE [LARGE SCALE GENOMIC DNA]</scope>
    <source>
        <strain>cv. Columbia</strain>
    </source>
</reference>
<reference key="2">
    <citation type="journal article" date="2017" name="Plant J.">
        <title>Araport11: a complete reannotation of the Arabidopsis thaliana reference genome.</title>
        <authorList>
            <person name="Cheng C.Y."/>
            <person name="Krishnakumar V."/>
            <person name="Chan A.P."/>
            <person name="Thibaud-Nissen F."/>
            <person name="Schobel S."/>
            <person name="Town C.D."/>
        </authorList>
    </citation>
    <scope>GENOME REANNOTATION</scope>
    <source>
        <strain>cv. Columbia</strain>
    </source>
</reference>
<proteinExistence type="predicted"/>
<comment type="alternative products">
    <event type="alternative splicing"/>
    <isoform>
        <id>Q9C7X8-1</id>
        <name>1</name>
        <sequence type="displayed"/>
    </isoform>
    <text>A number of isoforms are produced. According to EST sequences.</text>
</comment>
<organism>
    <name type="scientific">Arabidopsis thaliana</name>
    <name type="common">Mouse-ear cress</name>
    <dbReference type="NCBI Taxonomy" id="3702"/>
    <lineage>
        <taxon>Eukaryota</taxon>
        <taxon>Viridiplantae</taxon>
        <taxon>Streptophyta</taxon>
        <taxon>Embryophyta</taxon>
        <taxon>Tracheophyta</taxon>
        <taxon>Spermatophyta</taxon>
        <taxon>Magnoliopsida</taxon>
        <taxon>eudicotyledons</taxon>
        <taxon>Gunneridae</taxon>
        <taxon>Pentapetalae</taxon>
        <taxon>rosids</taxon>
        <taxon>malvids</taxon>
        <taxon>Brassicales</taxon>
        <taxon>Brassicaceae</taxon>
        <taxon>Camelineae</taxon>
        <taxon>Arabidopsis</taxon>
    </lineage>
</organism>
<name>FBL33_ARATH</name>
<protein>
    <recommendedName>
        <fullName>Putative F-box/LRR-repeat protein At1g56400</fullName>
    </recommendedName>
</protein>
<accession>Q9C7X8</accession>
<keyword id="KW-0025">Alternative splicing</keyword>
<keyword id="KW-0433">Leucine-rich repeat</keyword>
<keyword id="KW-1185">Reference proteome</keyword>
<keyword id="KW-0677">Repeat</keyword>